<comment type="function">
    <text evidence="1">NDH shuttles electrons from NAD(P)H:plastoquinone, via FMN and iron-sulfur (Fe-S) centers, to quinones in the photosynthetic chain and possibly in a chloroplast respiratory chain. The immediate electron acceptor for the enzyme in this species is believed to be plastoquinone. Couples the redox reaction to proton translocation, and thus conserves the redox energy in a proton gradient.</text>
</comment>
<comment type="catalytic activity">
    <reaction evidence="1">
        <text>a plastoquinone + NADH + (n+1) H(+)(in) = a plastoquinol + NAD(+) + n H(+)(out)</text>
        <dbReference type="Rhea" id="RHEA:42608"/>
        <dbReference type="Rhea" id="RHEA-COMP:9561"/>
        <dbReference type="Rhea" id="RHEA-COMP:9562"/>
        <dbReference type="ChEBI" id="CHEBI:15378"/>
        <dbReference type="ChEBI" id="CHEBI:17757"/>
        <dbReference type="ChEBI" id="CHEBI:57540"/>
        <dbReference type="ChEBI" id="CHEBI:57945"/>
        <dbReference type="ChEBI" id="CHEBI:62192"/>
    </reaction>
</comment>
<comment type="catalytic activity">
    <reaction evidence="1">
        <text>a plastoquinone + NADPH + (n+1) H(+)(in) = a plastoquinol + NADP(+) + n H(+)(out)</text>
        <dbReference type="Rhea" id="RHEA:42612"/>
        <dbReference type="Rhea" id="RHEA-COMP:9561"/>
        <dbReference type="Rhea" id="RHEA-COMP:9562"/>
        <dbReference type="ChEBI" id="CHEBI:15378"/>
        <dbReference type="ChEBI" id="CHEBI:17757"/>
        <dbReference type="ChEBI" id="CHEBI:57783"/>
        <dbReference type="ChEBI" id="CHEBI:58349"/>
        <dbReference type="ChEBI" id="CHEBI:62192"/>
    </reaction>
</comment>
<comment type="subunit">
    <text evidence="1">NDH is composed of at least 16 different subunits, 5 of which are encoded in the nucleus.</text>
</comment>
<comment type="subcellular location">
    <subcellularLocation>
        <location evidence="1">Plastid</location>
        <location evidence="1">Chloroplast thylakoid membrane</location>
        <topology evidence="1">Peripheral membrane protein</topology>
        <orientation evidence="1">Stromal side</orientation>
    </subcellularLocation>
</comment>
<comment type="similarity">
    <text evidence="1">Belongs to the complex I 30 kDa subunit family.</text>
</comment>
<organism>
    <name type="scientific">Atropa belladonna</name>
    <name type="common">Belladonna</name>
    <name type="synonym">Deadly nightshade</name>
    <dbReference type="NCBI Taxonomy" id="33113"/>
    <lineage>
        <taxon>Eukaryota</taxon>
        <taxon>Viridiplantae</taxon>
        <taxon>Streptophyta</taxon>
        <taxon>Embryophyta</taxon>
        <taxon>Tracheophyta</taxon>
        <taxon>Spermatophyta</taxon>
        <taxon>Magnoliopsida</taxon>
        <taxon>eudicotyledons</taxon>
        <taxon>Gunneridae</taxon>
        <taxon>Pentapetalae</taxon>
        <taxon>asterids</taxon>
        <taxon>lamiids</taxon>
        <taxon>Solanales</taxon>
        <taxon>Solanaceae</taxon>
        <taxon>Solanoideae</taxon>
        <taxon>Hyoscyameae</taxon>
        <taxon>Atropa</taxon>
    </lineage>
</organism>
<gene>
    <name evidence="1" type="primary">ndhJ</name>
</gene>
<feature type="chain" id="PRO_0000358243" description="NAD(P)H-quinone oxidoreductase subunit J, chloroplastic">
    <location>
        <begin position="1"/>
        <end position="158"/>
    </location>
</feature>
<dbReference type="EC" id="7.1.1.-" evidence="1"/>
<dbReference type="EMBL" id="AJ316582">
    <property type="protein sequence ID" value="CAC88047.1"/>
    <property type="molecule type" value="Genomic_DNA"/>
</dbReference>
<dbReference type="RefSeq" id="NP_783235.1">
    <property type="nucleotide sequence ID" value="NC_004561.1"/>
</dbReference>
<dbReference type="SMR" id="Q7FNS9"/>
<dbReference type="GeneID" id="806472"/>
<dbReference type="GO" id="GO:0009535">
    <property type="term" value="C:chloroplast thylakoid membrane"/>
    <property type="evidence" value="ECO:0007669"/>
    <property type="project" value="UniProtKB-SubCell"/>
</dbReference>
<dbReference type="GO" id="GO:0008137">
    <property type="term" value="F:NADH dehydrogenase (ubiquinone) activity"/>
    <property type="evidence" value="ECO:0007669"/>
    <property type="project" value="InterPro"/>
</dbReference>
<dbReference type="GO" id="GO:0048038">
    <property type="term" value="F:quinone binding"/>
    <property type="evidence" value="ECO:0007669"/>
    <property type="project" value="UniProtKB-KW"/>
</dbReference>
<dbReference type="GO" id="GO:0019684">
    <property type="term" value="P:photosynthesis, light reaction"/>
    <property type="evidence" value="ECO:0007669"/>
    <property type="project" value="UniProtKB-UniRule"/>
</dbReference>
<dbReference type="FunFam" id="3.30.460.80:FF:000004">
    <property type="entry name" value="NAD(P)H-quinone oxidoreductase subunit J, chloroplastic"/>
    <property type="match status" value="1"/>
</dbReference>
<dbReference type="Gene3D" id="3.30.460.80">
    <property type="entry name" value="NADH:ubiquinone oxidoreductase, 30kDa subunit"/>
    <property type="match status" value="1"/>
</dbReference>
<dbReference type="HAMAP" id="MF_01357">
    <property type="entry name" value="NDH1_NuoC"/>
    <property type="match status" value="1"/>
</dbReference>
<dbReference type="InterPro" id="IPR010218">
    <property type="entry name" value="NADH_DH_suC"/>
</dbReference>
<dbReference type="InterPro" id="IPR037232">
    <property type="entry name" value="NADH_quin_OxRdtase_su_C/D-like"/>
</dbReference>
<dbReference type="InterPro" id="IPR001268">
    <property type="entry name" value="NADH_UbQ_OxRdtase_30kDa_su"/>
</dbReference>
<dbReference type="InterPro" id="IPR020396">
    <property type="entry name" value="NADH_UbQ_OxRdtase_CS"/>
</dbReference>
<dbReference type="NCBIfam" id="NF009141">
    <property type="entry name" value="PRK12494.1"/>
    <property type="match status" value="1"/>
</dbReference>
<dbReference type="PANTHER" id="PTHR10884:SF14">
    <property type="entry name" value="NADH DEHYDROGENASE [UBIQUINONE] IRON-SULFUR PROTEIN 3, MITOCHONDRIAL"/>
    <property type="match status" value="1"/>
</dbReference>
<dbReference type="PANTHER" id="PTHR10884">
    <property type="entry name" value="NADH DEHYDROGENASE UBIQUINONE IRON-SULFUR PROTEIN 3"/>
    <property type="match status" value="1"/>
</dbReference>
<dbReference type="Pfam" id="PF00329">
    <property type="entry name" value="Complex1_30kDa"/>
    <property type="match status" value="1"/>
</dbReference>
<dbReference type="SUPFAM" id="SSF143243">
    <property type="entry name" value="Nqo5-like"/>
    <property type="match status" value="1"/>
</dbReference>
<dbReference type="PROSITE" id="PS00542">
    <property type="entry name" value="COMPLEX1_30K"/>
    <property type="match status" value="1"/>
</dbReference>
<sequence length="158" mass="18595">MQGRLSAWLVKHGLIHRSLGFDYQGIETLQIKPEDWHSIAVIFYVYGYNYLRSQCAYDVAPGGLLASVYHLTRIEDGVDQPEEVCIKVFASRRNPRIPSVFWVWKSVDFQERESYDMLGISYDNHPRLKRILMPESWIGWPLRKDYIAPNFYEIQDAH</sequence>
<protein>
    <recommendedName>
        <fullName evidence="1">NAD(P)H-quinone oxidoreductase subunit J, chloroplastic</fullName>
        <ecNumber evidence="1">7.1.1.-</ecNumber>
    </recommendedName>
    <alternativeName>
        <fullName>NAD(P)H dehydrogenase subunit J</fullName>
    </alternativeName>
    <alternativeName>
        <fullName evidence="1">NADH-plastoquinone oxidoreductase subunit J</fullName>
    </alternativeName>
</protein>
<keyword id="KW-0150">Chloroplast</keyword>
<keyword id="KW-0472">Membrane</keyword>
<keyword id="KW-0520">NAD</keyword>
<keyword id="KW-0521">NADP</keyword>
<keyword id="KW-0934">Plastid</keyword>
<keyword id="KW-0618">Plastoquinone</keyword>
<keyword id="KW-0874">Quinone</keyword>
<keyword id="KW-0793">Thylakoid</keyword>
<keyword id="KW-1278">Translocase</keyword>
<keyword id="KW-0813">Transport</keyword>
<accession>Q7FNS9</accession>
<name>NDHJ_ATRBE</name>
<evidence type="ECO:0000255" key="1">
    <source>
        <dbReference type="HAMAP-Rule" id="MF_01357"/>
    </source>
</evidence>
<geneLocation type="chloroplast"/>
<proteinExistence type="inferred from homology"/>
<reference key="1">
    <citation type="journal article" date="2002" name="Mol. Biol. Evol.">
        <title>The plastid chromosome of Atropa belladonna and its comparison with that of Nicotiana tabacum: the role of RNA editing in generating divergence in the process of plant speciation.</title>
        <authorList>
            <person name="Schmitz-Linneweber C."/>
            <person name="Regel R."/>
            <person name="Du T.G."/>
            <person name="Hupfer H."/>
            <person name="Herrmann R.G."/>
            <person name="Maier R.M."/>
        </authorList>
    </citation>
    <scope>NUCLEOTIDE SEQUENCE [LARGE SCALE GENOMIC DNA]</scope>
    <source>
        <strain>cv. Ab5p(kan)</strain>
    </source>
</reference>